<reference key="1">
    <citation type="journal article" date="2007" name="PLoS ONE">
        <title>The complete genome sequence and analysis of the Epsilonproteobacterium Arcobacter butzleri.</title>
        <authorList>
            <person name="Miller W.G."/>
            <person name="Parker C.T."/>
            <person name="Rubenfield M."/>
            <person name="Mendz G.L."/>
            <person name="Woesten M.M.S.M."/>
            <person name="Ussery D.W."/>
            <person name="Stolz J.F."/>
            <person name="Binnewies T.T."/>
            <person name="Hallin P.F."/>
            <person name="Wang G."/>
            <person name="Malek J.A."/>
            <person name="Rogosin A."/>
            <person name="Stanker L.H."/>
            <person name="Mandrell R.E."/>
        </authorList>
    </citation>
    <scope>NUCLEOTIDE SEQUENCE [LARGE SCALE GENOMIC DNA]</scope>
    <source>
        <strain>RM4018</strain>
    </source>
</reference>
<comment type="function">
    <text evidence="1">Catalyzes the NADPH-dependent reduction of L-glutamate 5-phosphate into L-glutamate 5-semialdehyde and phosphate. The product spontaneously undergoes cyclization to form 1-pyrroline-5-carboxylate.</text>
</comment>
<comment type="catalytic activity">
    <reaction evidence="1">
        <text>L-glutamate 5-semialdehyde + phosphate + NADP(+) = L-glutamyl 5-phosphate + NADPH + H(+)</text>
        <dbReference type="Rhea" id="RHEA:19541"/>
        <dbReference type="ChEBI" id="CHEBI:15378"/>
        <dbReference type="ChEBI" id="CHEBI:43474"/>
        <dbReference type="ChEBI" id="CHEBI:57783"/>
        <dbReference type="ChEBI" id="CHEBI:58066"/>
        <dbReference type="ChEBI" id="CHEBI:58274"/>
        <dbReference type="ChEBI" id="CHEBI:58349"/>
        <dbReference type="EC" id="1.2.1.41"/>
    </reaction>
</comment>
<comment type="pathway">
    <text evidence="1">Amino-acid biosynthesis; L-proline biosynthesis; L-glutamate 5-semialdehyde from L-glutamate: step 2/2.</text>
</comment>
<comment type="subcellular location">
    <subcellularLocation>
        <location evidence="1">Cytoplasm</location>
    </subcellularLocation>
</comment>
<comment type="similarity">
    <text evidence="1">Belongs to the gamma-glutamyl phosphate reductase family.</text>
</comment>
<name>PROA_ALIB4</name>
<gene>
    <name evidence="1" type="primary">proA</name>
    <name type="ordered locus">Abu_1757</name>
</gene>
<dbReference type="EC" id="1.2.1.41" evidence="1"/>
<dbReference type="EMBL" id="CP000361">
    <property type="protein sequence ID" value="ABV68003.1"/>
    <property type="molecule type" value="Genomic_DNA"/>
</dbReference>
<dbReference type="RefSeq" id="WP_012147724.1">
    <property type="nucleotide sequence ID" value="NC_009850.1"/>
</dbReference>
<dbReference type="SMR" id="A8EVN0"/>
<dbReference type="STRING" id="367737.Abu_1757"/>
<dbReference type="GeneID" id="24304430"/>
<dbReference type="KEGG" id="abu:Abu_1757"/>
<dbReference type="eggNOG" id="COG0014">
    <property type="taxonomic scope" value="Bacteria"/>
</dbReference>
<dbReference type="HOGENOM" id="CLU_030231_0_0_7"/>
<dbReference type="UniPathway" id="UPA00098">
    <property type="reaction ID" value="UER00360"/>
</dbReference>
<dbReference type="Proteomes" id="UP000001136">
    <property type="component" value="Chromosome"/>
</dbReference>
<dbReference type="GO" id="GO:0005737">
    <property type="term" value="C:cytoplasm"/>
    <property type="evidence" value="ECO:0007669"/>
    <property type="project" value="UniProtKB-SubCell"/>
</dbReference>
<dbReference type="GO" id="GO:0004350">
    <property type="term" value="F:glutamate-5-semialdehyde dehydrogenase activity"/>
    <property type="evidence" value="ECO:0007669"/>
    <property type="project" value="UniProtKB-UniRule"/>
</dbReference>
<dbReference type="GO" id="GO:0050661">
    <property type="term" value="F:NADP binding"/>
    <property type="evidence" value="ECO:0007669"/>
    <property type="project" value="InterPro"/>
</dbReference>
<dbReference type="GO" id="GO:0055129">
    <property type="term" value="P:L-proline biosynthetic process"/>
    <property type="evidence" value="ECO:0007669"/>
    <property type="project" value="UniProtKB-UniRule"/>
</dbReference>
<dbReference type="CDD" id="cd07079">
    <property type="entry name" value="ALDH_F18-19_ProA-GPR"/>
    <property type="match status" value="1"/>
</dbReference>
<dbReference type="FunFam" id="3.40.309.10:FF:000006">
    <property type="entry name" value="Gamma-glutamyl phosphate reductase"/>
    <property type="match status" value="1"/>
</dbReference>
<dbReference type="Gene3D" id="3.40.605.10">
    <property type="entry name" value="Aldehyde Dehydrogenase, Chain A, domain 1"/>
    <property type="match status" value="1"/>
</dbReference>
<dbReference type="Gene3D" id="3.40.309.10">
    <property type="entry name" value="Aldehyde Dehydrogenase, Chain A, domain 2"/>
    <property type="match status" value="1"/>
</dbReference>
<dbReference type="HAMAP" id="MF_00412">
    <property type="entry name" value="ProA"/>
    <property type="match status" value="1"/>
</dbReference>
<dbReference type="InterPro" id="IPR016161">
    <property type="entry name" value="Ald_DH/histidinol_DH"/>
</dbReference>
<dbReference type="InterPro" id="IPR016163">
    <property type="entry name" value="Ald_DH_C"/>
</dbReference>
<dbReference type="InterPro" id="IPR016162">
    <property type="entry name" value="Ald_DH_N"/>
</dbReference>
<dbReference type="InterPro" id="IPR015590">
    <property type="entry name" value="Aldehyde_DH_dom"/>
</dbReference>
<dbReference type="InterPro" id="IPR020593">
    <property type="entry name" value="G-glutamylP_reductase_CS"/>
</dbReference>
<dbReference type="InterPro" id="IPR012134">
    <property type="entry name" value="Glu-5-SA_DH"/>
</dbReference>
<dbReference type="InterPro" id="IPR000965">
    <property type="entry name" value="GPR_dom"/>
</dbReference>
<dbReference type="NCBIfam" id="NF001221">
    <property type="entry name" value="PRK00197.1"/>
    <property type="match status" value="1"/>
</dbReference>
<dbReference type="NCBIfam" id="TIGR00407">
    <property type="entry name" value="proA"/>
    <property type="match status" value="1"/>
</dbReference>
<dbReference type="PANTHER" id="PTHR11063:SF8">
    <property type="entry name" value="DELTA-1-PYRROLINE-5-CARBOXYLATE SYNTHASE"/>
    <property type="match status" value="1"/>
</dbReference>
<dbReference type="PANTHER" id="PTHR11063">
    <property type="entry name" value="GLUTAMATE SEMIALDEHYDE DEHYDROGENASE"/>
    <property type="match status" value="1"/>
</dbReference>
<dbReference type="Pfam" id="PF00171">
    <property type="entry name" value="Aldedh"/>
    <property type="match status" value="1"/>
</dbReference>
<dbReference type="PIRSF" id="PIRSF000151">
    <property type="entry name" value="GPR"/>
    <property type="match status" value="1"/>
</dbReference>
<dbReference type="SUPFAM" id="SSF53720">
    <property type="entry name" value="ALDH-like"/>
    <property type="match status" value="1"/>
</dbReference>
<dbReference type="PROSITE" id="PS01223">
    <property type="entry name" value="PROA"/>
    <property type="match status" value="1"/>
</dbReference>
<evidence type="ECO:0000255" key="1">
    <source>
        <dbReference type="HAMAP-Rule" id="MF_00412"/>
    </source>
</evidence>
<sequence>MQEFLQEAKNSSRIIANLGSAQKNRVLNEMADALIEHSSFILSHNQKDMNDAKLNNLNDALQDRLLLTEKRIQDMAIAIRQIASQQDPLGKILNGWVTKDGLNIQKVSIPIGVIGIIYESRPNVTSDTAALCFKSGNVCVLKGGKEAENSNKAIATILREVLRKNNLPEYAISLLPDSSREGVAKLIKQDKYVDLIVPRGGEALIRFVSENSSIPVIKHDKGICHIFIDQDANITKIFDIVVNAKCQKPSACNSIETLLIHTNIAALILSGLVETLSLHGTILKGCPETLQHINAIPATLEDFDTEYLANVLNIKIVANVDEAITHIQRHGSGHSESILSENYTTINKFLSEVDAACVYANASTRFTDGGEFGLGAEVGISTNKLHSRGPMGIEDLTTFKYKIYGQGQIRKG</sequence>
<feature type="chain" id="PRO_1000060837" description="Gamma-glutamyl phosphate reductase">
    <location>
        <begin position="1"/>
        <end position="412"/>
    </location>
</feature>
<proteinExistence type="inferred from homology"/>
<organism>
    <name type="scientific">Aliarcobacter butzleri (strain RM4018)</name>
    <name type="common">Arcobacter butzleri</name>
    <dbReference type="NCBI Taxonomy" id="367737"/>
    <lineage>
        <taxon>Bacteria</taxon>
        <taxon>Pseudomonadati</taxon>
        <taxon>Campylobacterota</taxon>
        <taxon>Epsilonproteobacteria</taxon>
        <taxon>Campylobacterales</taxon>
        <taxon>Arcobacteraceae</taxon>
        <taxon>Aliarcobacter</taxon>
    </lineage>
</organism>
<protein>
    <recommendedName>
        <fullName evidence="1">Gamma-glutamyl phosphate reductase</fullName>
        <shortName evidence="1">GPR</shortName>
        <ecNumber evidence="1">1.2.1.41</ecNumber>
    </recommendedName>
    <alternativeName>
        <fullName evidence="1">Glutamate-5-semialdehyde dehydrogenase</fullName>
    </alternativeName>
    <alternativeName>
        <fullName evidence="1">Glutamyl-gamma-semialdehyde dehydrogenase</fullName>
        <shortName evidence="1">GSA dehydrogenase</shortName>
    </alternativeName>
</protein>
<accession>A8EVN0</accession>
<keyword id="KW-0028">Amino-acid biosynthesis</keyword>
<keyword id="KW-0963">Cytoplasm</keyword>
<keyword id="KW-0521">NADP</keyword>
<keyword id="KW-0560">Oxidoreductase</keyword>
<keyword id="KW-0641">Proline biosynthesis</keyword>
<keyword id="KW-1185">Reference proteome</keyword>